<reference key="1">
    <citation type="submission" date="2007-09" db="EMBL/GenBank/DDBJ databases">
        <title>Complete sequence of chromosome of Serratia proteamaculans 568.</title>
        <authorList>
            <consortium name="US DOE Joint Genome Institute"/>
            <person name="Copeland A."/>
            <person name="Lucas S."/>
            <person name="Lapidus A."/>
            <person name="Barry K."/>
            <person name="Glavina del Rio T."/>
            <person name="Dalin E."/>
            <person name="Tice H."/>
            <person name="Pitluck S."/>
            <person name="Chain P."/>
            <person name="Malfatti S."/>
            <person name="Shin M."/>
            <person name="Vergez L."/>
            <person name="Schmutz J."/>
            <person name="Larimer F."/>
            <person name="Land M."/>
            <person name="Hauser L."/>
            <person name="Kyrpides N."/>
            <person name="Kim E."/>
            <person name="Taghavi S."/>
            <person name="Newman L."/>
            <person name="Vangronsveld J."/>
            <person name="van der Lelie D."/>
            <person name="Richardson P."/>
        </authorList>
    </citation>
    <scope>NUCLEOTIDE SEQUENCE [LARGE SCALE GENOMIC DNA]</scope>
    <source>
        <strain>568</strain>
    </source>
</reference>
<organism>
    <name type="scientific">Serratia proteamaculans (strain 568)</name>
    <dbReference type="NCBI Taxonomy" id="399741"/>
    <lineage>
        <taxon>Bacteria</taxon>
        <taxon>Pseudomonadati</taxon>
        <taxon>Pseudomonadota</taxon>
        <taxon>Gammaproteobacteria</taxon>
        <taxon>Enterobacterales</taxon>
        <taxon>Yersiniaceae</taxon>
        <taxon>Serratia</taxon>
    </lineage>
</organism>
<evidence type="ECO:0000255" key="1">
    <source>
        <dbReference type="HAMAP-Rule" id="MF_00246"/>
    </source>
</evidence>
<name>GAL1_SERP5</name>
<proteinExistence type="inferred from homology"/>
<gene>
    <name evidence="1" type="primary">galK</name>
    <name type="ordered locus">Spro_1291</name>
</gene>
<comment type="function">
    <text evidence="1">Catalyzes the transfer of the gamma-phosphate of ATP to D-galactose to form alpha-D-galactose-1-phosphate (Gal-1-P).</text>
</comment>
<comment type="catalytic activity">
    <reaction evidence="1">
        <text>alpha-D-galactose + ATP = alpha-D-galactose 1-phosphate + ADP + H(+)</text>
        <dbReference type="Rhea" id="RHEA:13553"/>
        <dbReference type="ChEBI" id="CHEBI:15378"/>
        <dbReference type="ChEBI" id="CHEBI:28061"/>
        <dbReference type="ChEBI" id="CHEBI:30616"/>
        <dbReference type="ChEBI" id="CHEBI:58336"/>
        <dbReference type="ChEBI" id="CHEBI:456216"/>
        <dbReference type="EC" id="2.7.1.6"/>
    </reaction>
</comment>
<comment type="pathway">
    <text evidence="1">Carbohydrate metabolism; galactose metabolism.</text>
</comment>
<comment type="subcellular location">
    <subcellularLocation>
        <location evidence="1">Cytoplasm</location>
    </subcellularLocation>
</comment>
<comment type="similarity">
    <text evidence="1">Belongs to the GHMP kinase family. GalK subfamily.</text>
</comment>
<protein>
    <recommendedName>
        <fullName evidence="1">Galactokinase</fullName>
        <ecNumber evidence="1">2.7.1.6</ecNumber>
    </recommendedName>
    <alternativeName>
        <fullName evidence="1">Galactose kinase</fullName>
    </alternativeName>
</protein>
<accession>A8GBA5</accession>
<dbReference type="EC" id="2.7.1.6" evidence="1"/>
<dbReference type="EMBL" id="CP000826">
    <property type="protein sequence ID" value="ABV40395.1"/>
    <property type="molecule type" value="Genomic_DNA"/>
</dbReference>
<dbReference type="SMR" id="A8GBA5"/>
<dbReference type="STRING" id="399741.Spro_1291"/>
<dbReference type="KEGG" id="spe:Spro_1291"/>
<dbReference type="eggNOG" id="COG0153">
    <property type="taxonomic scope" value="Bacteria"/>
</dbReference>
<dbReference type="HOGENOM" id="CLU_017814_2_1_6"/>
<dbReference type="OrthoDB" id="250531at2"/>
<dbReference type="UniPathway" id="UPA00214"/>
<dbReference type="GO" id="GO:0005829">
    <property type="term" value="C:cytosol"/>
    <property type="evidence" value="ECO:0007669"/>
    <property type="project" value="TreeGrafter"/>
</dbReference>
<dbReference type="GO" id="GO:0005524">
    <property type="term" value="F:ATP binding"/>
    <property type="evidence" value="ECO:0007669"/>
    <property type="project" value="UniProtKB-UniRule"/>
</dbReference>
<dbReference type="GO" id="GO:0004335">
    <property type="term" value="F:galactokinase activity"/>
    <property type="evidence" value="ECO:0007669"/>
    <property type="project" value="UniProtKB-UniRule"/>
</dbReference>
<dbReference type="GO" id="GO:0000287">
    <property type="term" value="F:magnesium ion binding"/>
    <property type="evidence" value="ECO:0007669"/>
    <property type="project" value="UniProtKB-UniRule"/>
</dbReference>
<dbReference type="GO" id="GO:0006012">
    <property type="term" value="P:galactose metabolic process"/>
    <property type="evidence" value="ECO:0007669"/>
    <property type="project" value="UniProtKB-UniRule"/>
</dbReference>
<dbReference type="FunFam" id="3.30.230.10:FF:000017">
    <property type="entry name" value="Galactokinase"/>
    <property type="match status" value="1"/>
</dbReference>
<dbReference type="FunFam" id="3.30.70.890:FF:000001">
    <property type="entry name" value="Galactokinase"/>
    <property type="match status" value="1"/>
</dbReference>
<dbReference type="Gene3D" id="3.30.230.10">
    <property type="match status" value="1"/>
</dbReference>
<dbReference type="Gene3D" id="3.30.70.890">
    <property type="entry name" value="GHMP kinase, C-terminal domain"/>
    <property type="match status" value="1"/>
</dbReference>
<dbReference type="HAMAP" id="MF_00246">
    <property type="entry name" value="Galactokinase"/>
    <property type="match status" value="1"/>
</dbReference>
<dbReference type="InterPro" id="IPR000705">
    <property type="entry name" value="Galactokinase"/>
</dbReference>
<dbReference type="InterPro" id="IPR022963">
    <property type="entry name" value="Galactokinase_bac"/>
</dbReference>
<dbReference type="InterPro" id="IPR019741">
    <property type="entry name" value="Galactokinase_CS"/>
</dbReference>
<dbReference type="InterPro" id="IPR019539">
    <property type="entry name" value="GalKase_N"/>
</dbReference>
<dbReference type="InterPro" id="IPR013750">
    <property type="entry name" value="GHMP_kinase_C_dom"/>
</dbReference>
<dbReference type="InterPro" id="IPR036554">
    <property type="entry name" value="GHMP_kinase_C_sf"/>
</dbReference>
<dbReference type="InterPro" id="IPR006204">
    <property type="entry name" value="GHMP_kinase_N_dom"/>
</dbReference>
<dbReference type="InterPro" id="IPR006203">
    <property type="entry name" value="GHMP_knse_ATP-bd_CS"/>
</dbReference>
<dbReference type="InterPro" id="IPR006206">
    <property type="entry name" value="Mevalonate/galactokinase"/>
</dbReference>
<dbReference type="InterPro" id="IPR020568">
    <property type="entry name" value="Ribosomal_Su5_D2-typ_SF"/>
</dbReference>
<dbReference type="InterPro" id="IPR014721">
    <property type="entry name" value="Ribsml_uS5_D2-typ_fold_subgr"/>
</dbReference>
<dbReference type="NCBIfam" id="TIGR00131">
    <property type="entry name" value="gal_kin"/>
    <property type="match status" value="1"/>
</dbReference>
<dbReference type="NCBIfam" id="NF003472">
    <property type="entry name" value="PRK05101.1"/>
    <property type="match status" value="1"/>
</dbReference>
<dbReference type="PANTHER" id="PTHR10457:SF7">
    <property type="entry name" value="GALACTOKINASE-RELATED"/>
    <property type="match status" value="1"/>
</dbReference>
<dbReference type="PANTHER" id="PTHR10457">
    <property type="entry name" value="MEVALONATE KINASE/GALACTOKINASE"/>
    <property type="match status" value="1"/>
</dbReference>
<dbReference type="Pfam" id="PF10509">
    <property type="entry name" value="GalKase_gal_bdg"/>
    <property type="match status" value="1"/>
</dbReference>
<dbReference type="Pfam" id="PF08544">
    <property type="entry name" value="GHMP_kinases_C"/>
    <property type="match status" value="1"/>
</dbReference>
<dbReference type="Pfam" id="PF00288">
    <property type="entry name" value="GHMP_kinases_N"/>
    <property type="match status" value="1"/>
</dbReference>
<dbReference type="PIRSF" id="PIRSF000530">
    <property type="entry name" value="Galactokinase"/>
    <property type="match status" value="1"/>
</dbReference>
<dbReference type="PRINTS" id="PR00473">
    <property type="entry name" value="GALCTOKINASE"/>
</dbReference>
<dbReference type="PRINTS" id="PR00959">
    <property type="entry name" value="MEVGALKINASE"/>
</dbReference>
<dbReference type="SUPFAM" id="SSF55060">
    <property type="entry name" value="GHMP Kinase, C-terminal domain"/>
    <property type="match status" value="1"/>
</dbReference>
<dbReference type="SUPFAM" id="SSF54211">
    <property type="entry name" value="Ribosomal protein S5 domain 2-like"/>
    <property type="match status" value="1"/>
</dbReference>
<dbReference type="PROSITE" id="PS00106">
    <property type="entry name" value="GALACTOKINASE"/>
    <property type="match status" value="1"/>
</dbReference>
<dbReference type="PROSITE" id="PS00627">
    <property type="entry name" value="GHMP_KINASES_ATP"/>
    <property type="match status" value="1"/>
</dbReference>
<sequence length="383" mass="41488">MSLKNLTHALFTERFGYAPTLTIQAPGRVNLIGEHTDYNDGFVLPCAIDYQTVIACAKRDDRQIRVIAADYEGQQDQFSLDSPIVSHPDQRWSDYVRGVIKHLQQRNADFGGADLVISGNVPQGAGLSSSASLEVAVGQAMQALYALPLDGVALALNGQEAENQFVGCNCGIMDQLISALGEKDHALLIDCRTLETRAVSVPEDIAVVIINSNVKRGLVDSEYNTRREQCEEAARFFGVKALRDVSPDLFFPIQHELDPIVAKRARHVISENDRTLAAADALAAGDMKLMGKLMAESHVSMRDDFEITVPPIDRLVEIVKSVIGDRGGVRMTGGGFGGCIVALMPLALVEPVRAAVAREYPLQTNGLKETFYVCKASEGAGTC</sequence>
<feature type="chain" id="PRO_1000059006" description="Galactokinase">
    <location>
        <begin position="1"/>
        <end position="383"/>
    </location>
</feature>
<feature type="active site" description="Proton acceptor" evidence="1">
    <location>
        <position position="174"/>
    </location>
</feature>
<feature type="binding site" evidence="1">
    <location>
        <begin position="34"/>
        <end position="37"/>
    </location>
    <ligand>
        <name>substrate</name>
    </ligand>
</feature>
<feature type="binding site" evidence="1">
    <location>
        <begin position="124"/>
        <end position="130"/>
    </location>
    <ligand>
        <name>ATP</name>
        <dbReference type="ChEBI" id="CHEBI:30616"/>
    </ligand>
</feature>
<feature type="binding site" evidence="1">
    <location>
        <position position="130"/>
    </location>
    <ligand>
        <name>Mg(2+)</name>
        <dbReference type="ChEBI" id="CHEBI:18420"/>
    </ligand>
</feature>
<feature type="binding site" evidence="1">
    <location>
        <position position="162"/>
    </location>
    <ligand>
        <name>Mg(2+)</name>
        <dbReference type="ChEBI" id="CHEBI:18420"/>
    </ligand>
</feature>
<feature type="binding site" evidence="1">
    <location>
        <position position="223"/>
    </location>
    <ligand>
        <name>substrate</name>
    </ligand>
</feature>
<feature type="site" description="Transition state stabilizer" evidence="1">
    <location>
        <position position="28"/>
    </location>
</feature>
<keyword id="KW-0067">ATP-binding</keyword>
<keyword id="KW-0119">Carbohydrate metabolism</keyword>
<keyword id="KW-0963">Cytoplasm</keyword>
<keyword id="KW-0299">Galactose metabolism</keyword>
<keyword id="KW-0418">Kinase</keyword>
<keyword id="KW-0460">Magnesium</keyword>
<keyword id="KW-0479">Metal-binding</keyword>
<keyword id="KW-0547">Nucleotide-binding</keyword>
<keyword id="KW-0808">Transferase</keyword>